<protein>
    <recommendedName>
        <fullName evidence="1">Large ribosomal subunit protein uL22</fullName>
    </recommendedName>
    <alternativeName>
        <fullName evidence="3">50S ribosomal protein L22</fullName>
    </alternativeName>
</protein>
<evidence type="ECO:0000255" key="1">
    <source>
        <dbReference type="HAMAP-Rule" id="MF_01331"/>
    </source>
</evidence>
<evidence type="ECO:0000256" key="2">
    <source>
        <dbReference type="SAM" id="MobiDB-lite"/>
    </source>
</evidence>
<evidence type="ECO:0000305" key="3"/>
<comment type="function">
    <text evidence="1">This protein binds specifically to 23S rRNA; its binding is stimulated by other ribosomal proteins, e.g. L4, L17, and L20. It is important during the early stages of 50S assembly. It makes multiple contacts with different domains of the 23S rRNA in the assembled 50S subunit and ribosome (By similarity).</text>
</comment>
<comment type="function">
    <text evidence="1">The globular domain of the protein is located near the polypeptide exit tunnel on the outside of the subunit, while an extended beta-hairpin is found that lines the wall of the exit tunnel in the center of the 70S ribosome.</text>
</comment>
<comment type="subunit">
    <text evidence="1">Part of the 50S ribosomal subunit.</text>
</comment>
<comment type="similarity">
    <text evidence="1">Belongs to the universal ribosomal protein uL22 family.</text>
</comment>
<gene>
    <name evidence="1" type="primary">rplV</name>
    <name type="ordered locus">BT0483</name>
</gene>
<organism>
    <name type="scientific">Borrelia turicatae (strain 91E135)</name>
    <dbReference type="NCBI Taxonomy" id="314724"/>
    <lineage>
        <taxon>Bacteria</taxon>
        <taxon>Pseudomonadati</taxon>
        <taxon>Spirochaetota</taxon>
        <taxon>Spirochaetia</taxon>
        <taxon>Spirochaetales</taxon>
        <taxon>Borreliaceae</taxon>
        <taxon>Borrelia</taxon>
    </lineage>
</organism>
<dbReference type="EMBL" id="CP000049">
    <property type="protein sequence ID" value="AAX17811.1"/>
    <property type="molecule type" value="Genomic_DNA"/>
</dbReference>
<dbReference type="RefSeq" id="WP_011772430.1">
    <property type="nucleotide sequence ID" value="NC_008710.1"/>
</dbReference>
<dbReference type="SMR" id="A1QZR9"/>
<dbReference type="KEGG" id="btu:BT0483"/>
<dbReference type="eggNOG" id="COG0091">
    <property type="taxonomic scope" value="Bacteria"/>
</dbReference>
<dbReference type="HOGENOM" id="CLU_083987_3_1_12"/>
<dbReference type="Proteomes" id="UP000001205">
    <property type="component" value="Chromosome"/>
</dbReference>
<dbReference type="GO" id="GO:0022625">
    <property type="term" value="C:cytosolic large ribosomal subunit"/>
    <property type="evidence" value="ECO:0007669"/>
    <property type="project" value="TreeGrafter"/>
</dbReference>
<dbReference type="GO" id="GO:0019843">
    <property type="term" value="F:rRNA binding"/>
    <property type="evidence" value="ECO:0007669"/>
    <property type="project" value="UniProtKB-UniRule"/>
</dbReference>
<dbReference type="GO" id="GO:0003735">
    <property type="term" value="F:structural constituent of ribosome"/>
    <property type="evidence" value="ECO:0007669"/>
    <property type="project" value="InterPro"/>
</dbReference>
<dbReference type="GO" id="GO:0006412">
    <property type="term" value="P:translation"/>
    <property type="evidence" value="ECO:0007669"/>
    <property type="project" value="UniProtKB-UniRule"/>
</dbReference>
<dbReference type="CDD" id="cd00336">
    <property type="entry name" value="Ribosomal_L22"/>
    <property type="match status" value="1"/>
</dbReference>
<dbReference type="Gene3D" id="3.90.470.10">
    <property type="entry name" value="Ribosomal protein L22/L17"/>
    <property type="match status" value="1"/>
</dbReference>
<dbReference type="HAMAP" id="MF_01331_B">
    <property type="entry name" value="Ribosomal_uL22_B"/>
    <property type="match status" value="1"/>
</dbReference>
<dbReference type="InterPro" id="IPR001063">
    <property type="entry name" value="Ribosomal_uL22"/>
</dbReference>
<dbReference type="InterPro" id="IPR005727">
    <property type="entry name" value="Ribosomal_uL22_bac/chlpt-type"/>
</dbReference>
<dbReference type="InterPro" id="IPR047867">
    <property type="entry name" value="Ribosomal_uL22_bac/org-type"/>
</dbReference>
<dbReference type="InterPro" id="IPR018260">
    <property type="entry name" value="Ribosomal_uL22_CS"/>
</dbReference>
<dbReference type="InterPro" id="IPR036394">
    <property type="entry name" value="Ribosomal_uL22_sf"/>
</dbReference>
<dbReference type="NCBIfam" id="TIGR01044">
    <property type="entry name" value="rplV_bact"/>
    <property type="match status" value="1"/>
</dbReference>
<dbReference type="PANTHER" id="PTHR13501">
    <property type="entry name" value="CHLOROPLAST 50S RIBOSOMAL PROTEIN L22-RELATED"/>
    <property type="match status" value="1"/>
</dbReference>
<dbReference type="PANTHER" id="PTHR13501:SF8">
    <property type="entry name" value="LARGE RIBOSOMAL SUBUNIT PROTEIN UL22M"/>
    <property type="match status" value="1"/>
</dbReference>
<dbReference type="Pfam" id="PF00237">
    <property type="entry name" value="Ribosomal_L22"/>
    <property type="match status" value="1"/>
</dbReference>
<dbReference type="SUPFAM" id="SSF54843">
    <property type="entry name" value="Ribosomal protein L22"/>
    <property type="match status" value="1"/>
</dbReference>
<dbReference type="PROSITE" id="PS00464">
    <property type="entry name" value="RIBOSOMAL_L22"/>
    <property type="match status" value="1"/>
</dbReference>
<sequence length="120" mass="13718">MFVNRRYTARGKNLPSSPKKVRPIADNIRGKPYSEAVAILCSMPNKCAKLLGKVVKSAASNAMYHNRNLSEDMIFIKTVMVDDGRRRRSVWPRARGRADRLVNRSCHIFVEVYEKMYGGE</sequence>
<reference key="1">
    <citation type="submission" date="2004-12" db="EMBL/GenBank/DDBJ databases">
        <title>The genome sequence of Borrelia hermsii and Borrelia turicatae: comparative analysis of two agents of endemic N. America relapsing fever.</title>
        <authorList>
            <person name="Porcella S.F."/>
            <person name="Raffel S.J."/>
            <person name="Schrumpf M.E."/>
            <person name="Montgomery B."/>
            <person name="Smith T."/>
            <person name="Schwan T.G."/>
        </authorList>
    </citation>
    <scope>NUCLEOTIDE SEQUENCE [LARGE SCALE GENOMIC DNA]</scope>
    <source>
        <strain>91E135</strain>
    </source>
</reference>
<accession>A1QZR9</accession>
<name>RL22_BORT9</name>
<keyword id="KW-1185">Reference proteome</keyword>
<keyword id="KW-0687">Ribonucleoprotein</keyword>
<keyword id="KW-0689">Ribosomal protein</keyword>
<keyword id="KW-0694">RNA-binding</keyword>
<keyword id="KW-0699">rRNA-binding</keyword>
<proteinExistence type="inferred from homology"/>
<feature type="chain" id="PRO_1000166047" description="Large ribosomal subunit protein uL22">
    <location>
        <begin position="1"/>
        <end position="120"/>
    </location>
</feature>
<feature type="region of interest" description="Disordered" evidence="2">
    <location>
        <begin position="1"/>
        <end position="20"/>
    </location>
</feature>